<comment type="function">
    <text evidence="1">Divisome component that associates with the complex late in its assembly, after the Z-ring is formed, and is dependent on DivIC and PBP2B for its recruitment to the divisome. Together with EzrA, is a key component of the system that regulates PBP1 localization during cell cycle progression. Its main role could be the removal of PBP1 from the cell pole after pole maturation is completed. Also contributes to the recruitment of PBP1 to the division complex. Not essential for septum formation.</text>
</comment>
<comment type="subunit">
    <text evidence="1">Forms polymers through the coiled coil domains. Interacts with PBP1, MreC and EzrA.</text>
</comment>
<comment type="subcellular location">
    <subcellularLocation>
        <location evidence="1">Cytoplasm</location>
    </subcellularLocation>
    <text evidence="1">Shuttles between the lateral wall and the division site in a cell cycle-dependent manner.</text>
</comment>
<comment type="similarity">
    <text evidence="1">Belongs to the GpsB family.</text>
</comment>
<keyword id="KW-0131">Cell cycle</keyword>
<keyword id="KW-0132">Cell division</keyword>
<keyword id="KW-0133">Cell shape</keyword>
<keyword id="KW-0175">Coiled coil</keyword>
<keyword id="KW-0963">Cytoplasm</keyword>
<keyword id="KW-1185">Reference proteome</keyword>
<accession>Q97SI9</accession>
<evidence type="ECO:0000255" key="1">
    <source>
        <dbReference type="HAMAP-Rule" id="MF_02011"/>
    </source>
</evidence>
<proteinExistence type="inferred from homology"/>
<sequence>MASIIFSAKDIFEQEFGREVRGYNKVEVDEFLDDVIKDYETYAALVKSLRQEIADLKEELTRKPKPSPVQAEPLEAAITSSMTNFDILKRLNRLEKEVFGKQILDNSDF</sequence>
<organism>
    <name type="scientific">Streptococcus pneumoniae serotype 4 (strain ATCC BAA-334 / TIGR4)</name>
    <dbReference type="NCBI Taxonomy" id="170187"/>
    <lineage>
        <taxon>Bacteria</taxon>
        <taxon>Bacillati</taxon>
        <taxon>Bacillota</taxon>
        <taxon>Bacilli</taxon>
        <taxon>Lactobacillales</taxon>
        <taxon>Streptococcaceae</taxon>
        <taxon>Streptococcus</taxon>
    </lineage>
</organism>
<reference key="1">
    <citation type="journal article" date="2001" name="Science">
        <title>Complete genome sequence of a virulent isolate of Streptococcus pneumoniae.</title>
        <authorList>
            <person name="Tettelin H."/>
            <person name="Nelson K.E."/>
            <person name="Paulsen I.T."/>
            <person name="Eisen J.A."/>
            <person name="Read T.D."/>
            <person name="Peterson S.N."/>
            <person name="Heidelberg J.F."/>
            <person name="DeBoy R.T."/>
            <person name="Haft D.H."/>
            <person name="Dodson R.J."/>
            <person name="Durkin A.S."/>
            <person name="Gwinn M.L."/>
            <person name="Kolonay J.F."/>
            <person name="Nelson W.C."/>
            <person name="Peterson J.D."/>
            <person name="Umayam L.A."/>
            <person name="White O."/>
            <person name="Salzberg S.L."/>
            <person name="Lewis M.R."/>
            <person name="Radune D."/>
            <person name="Holtzapple E.K."/>
            <person name="Khouri H.M."/>
            <person name="Wolf A.M."/>
            <person name="Utterback T.R."/>
            <person name="Hansen C.L."/>
            <person name="McDonald L.A."/>
            <person name="Feldblyum T.V."/>
            <person name="Angiuoli S.V."/>
            <person name="Dickinson T."/>
            <person name="Hickey E.K."/>
            <person name="Holt I.E."/>
            <person name="Loftus B.J."/>
            <person name="Yang F."/>
            <person name="Smith H.O."/>
            <person name="Venter J.C."/>
            <person name="Dougherty B.A."/>
            <person name="Morrison D.A."/>
            <person name="Hollingshead S.K."/>
            <person name="Fraser C.M."/>
        </authorList>
    </citation>
    <scope>NUCLEOTIDE SEQUENCE [LARGE SCALE GENOMIC DNA]</scope>
    <source>
        <strain>ATCC BAA-334 / TIGR4</strain>
    </source>
</reference>
<name>GPSB_STRPN</name>
<feature type="chain" id="PRO_0000337953" description="Cell cycle protein GpsB">
    <location>
        <begin position="1"/>
        <end position="109"/>
    </location>
</feature>
<feature type="coiled-coil region" evidence="1">
    <location>
        <begin position="36"/>
        <end position="63"/>
    </location>
</feature>
<dbReference type="EMBL" id="AE005672">
    <property type="protein sequence ID" value="AAK74539.1"/>
    <property type="molecule type" value="Genomic_DNA"/>
</dbReference>
<dbReference type="PIR" id="B95043">
    <property type="entry name" value="B95043"/>
</dbReference>
<dbReference type="RefSeq" id="WP_000146522.1">
    <property type="nucleotide sequence ID" value="NZ_CP155539.1"/>
</dbReference>
<dbReference type="SMR" id="Q97SI9"/>
<dbReference type="PaxDb" id="170187-SP_0372"/>
<dbReference type="EnsemblBacteria" id="AAK74539">
    <property type="protein sequence ID" value="AAK74539"/>
    <property type="gene ID" value="SP_0372"/>
</dbReference>
<dbReference type="GeneID" id="45652165"/>
<dbReference type="KEGG" id="spn:SP_0372"/>
<dbReference type="eggNOG" id="COG3599">
    <property type="taxonomic scope" value="Bacteria"/>
</dbReference>
<dbReference type="PhylomeDB" id="Q97SI9"/>
<dbReference type="Proteomes" id="UP000000585">
    <property type="component" value="Chromosome"/>
</dbReference>
<dbReference type="GO" id="GO:0005737">
    <property type="term" value="C:cytoplasm"/>
    <property type="evidence" value="ECO:0007669"/>
    <property type="project" value="UniProtKB-SubCell"/>
</dbReference>
<dbReference type="GO" id="GO:0051301">
    <property type="term" value="P:cell division"/>
    <property type="evidence" value="ECO:0007669"/>
    <property type="project" value="UniProtKB-UniRule"/>
</dbReference>
<dbReference type="GO" id="GO:0008360">
    <property type="term" value="P:regulation of cell shape"/>
    <property type="evidence" value="ECO:0007669"/>
    <property type="project" value="UniProtKB-UniRule"/>
</dbReference>
<dbReference type="Gene3D" id="6.10.250.660">
    <property type="match status" value="1"/>
</dbReference>
<dbReference type="HAMAP" id="MF_02011">
    <property type="entry name" value="GpsB"/>
    <property type="match status" value="1"/>
</dbReference>
<dbReference type="InterPro" id="IPR011229">
    <property type="entry name" value="Cell_cycle_GpsB"/>
</dbReference>
<dbReference type="InterPro" id="IPR019933">
    <property type="entry name" value="DivIVA_domain"/>
</dbReference>
<dbReference type="InterPro" id="IPR007793">
    <property type="entry name" value="DivIVA_fam"/>
</dbReference>
<dbReference type="NCBIfam" id="TIGR03544">
    <property type="entry name" value="DivI1A_domain"/>
    <property type="match status" value="1"/>
</dbReference>
<dbReference type="NCBIfam" id="NF010725">
    <property type="entry name" value="PRK14127.1"/>
    <property type="match status" value="1"/>
</dbReference>
<dbReference type="PANTHER" id="PTHR35794:SF1">
    <property type="entry name" value="CELL CYCLE PROTEIN GPSB"/>
    <property type="match status" value="1"/>
</dbReference>
<dbReference type="PANTHER" id="PTHR35794">
    <property type="entry name" value="CELL DIVISION PROTEIN DIVIVA"/>
    <property type="match status" value="1"/>
</dbReference>
<dbReference type="Pfam" id="PF05103">
    <property type="entry name" value="DivIVA"/>
    <property type="match status" value="1"/>
</dbReference>
<dbReference type="PIRSF" id="PIRSF029938">
    <property type="entry name" value="UCP029938"/>
    <property type="match status" value="1"/>
</dbReference>
<gene>
    <name evidence="1" type="primary">gpsB</name>
    <name type="ordered locus">SP_0372</name>
</gene>
<protein>
    <recommendedName>
        <fullName evidence="1">Cell cycle protein GpsB</fullName>
    </recommendedName>
    <alternativeName>
        <fullName evidence="1">Guiding PBP1-shuttling protein</fullName>
    </alternativeName>
</protein>